<keyword id="KW-0030">Aminoacyl-tRNA synthetase</keyword>
<keyword id="KW-0067">ATP-binding</keyword>
<keyword id="KW-0963">Cytoplasm</keyword>
<keyword id="KW-0436">Ligase</keyword>
<keyword id="KW-0547">Nucleotide-binding</keyword>
<keyword id="KW-0648">Protein biosynthesis</keyword>
<keyword id="KW-1185">Reference proteome</keyword>
<organism>
    <name type="scientific">Saccharopolyspora erythraea (strain ATCC 11635 / DSM 40517 / JCM 4748 / NBRC 13426 / NCIMB 8594 / NRRL 2338)</name>
    <dbReference type="NCBI Taxonomy" id="405948"/>
    <lineage>
        <taxon>Bacteria</taxon>
        <taxon>Bacillati</taxon>
        <taxon>Actinomycetota</taxon>
        <taxon>Actinomycetes</taxon>
        <taxon>Pseudonocardiales</taxon>
        <taxon>Pseudonocardiaceae</taxon>
        <taxon>Saccharopolyspora</taxon>
    </lineage>
</organism>
<comment type="catalytic activity">
    <reaction evidence="1">
        <text>tRNA(His) + L-histidine + ATP = L-histidyl-tRNA(His) + AMP + diphosphate + H(+)</text>
        <dbReference type="Rhea" id="RHEA:17313"/>
        <dbReference type="Rhea" id="RHEA-COMP:9665"/>
        <dbReference type="Rhea" id="RHEA-COMP:9689"/>
        <dbReference type="ChEBI" id="CHEBI:15378"/>
        <dbReference type="ChEBI" id="CHEBI:30616"/>
        <dbReference type="ChEBI" id="CHEBI:33019"/>
        <dbReference type="ChEBI" id="CHEBI:57595"/>
        <dbReference type="ChEBI" id="CHEBI:78442"/>
        <dbReference type="ChEBI" id="CHEBI:78527"/>
        <dbReference type="ChEBI" id="CHEBI:456215"/>
        <dbReference type="EC" id="6.1.1.21"/>
    </reaction>
</comment>
<comment type="subunit">
    <text evidence="1">Homodimer.</text>
</comment>
<comment type="subcellular location">
    <subcellularLocation>
        <location evidence="1">Cytoplasm</location>
    </subcellularLocation>
</comment>
<comment type="similarity">
    <text evidence="1">Belongs to the class-II aminoacyl-tRNA synthetase family.</text>
</comment>
<accession>A4FBB7</accession>
<reference key="1">
    <citation type="journal article" date="2007" name="Nat. Biotechnol.">
        <title>Complete genome sequence of the erythromycin-producing bacterium Saccharopolyspora erythraea NRRL23338.</title>
        <authorList>
            <person name="Oliynyk M."/>
            <person name="Samborskyy M."/>
            <person name="Lester J.B."/>
            <person name="Mironenko T."/>
            <person name="Scott N."/>
            <person name="Dickens S."/>
            <person name="Haydock S.F."/>
            <person name="Leadlay P.F."/>
        </authorList>
    </citation>
    <scope>NUCLEOTIDE SEQUENCE [LARGE SCALE GENOMIC DNA]</scope>
    <source>
        <strain>ATCC 11635 / DSM 40517 / JCM 4748 / NBRC 13426 / NCIMB 8594 / NRRL 2338</strain>
    </source>
</reference>
<sequence>MSTFNAPKGIPEYFPPESAAFLAVRETLADAARRAGYGYIELPLFEDTTLFARGVGESTDVVSKEMYTFADRGGRSVTLRPEGTAGVTRSVIENGLDRGQLPVKLYYSGAFFRYERPQAGRYRQLQQLGVEAIGVDDPALDAEVIAIADEGYRRLGLTGYRIELTSLGDETCRPSYRAKLQEFLRGLPLDEDTRKRAELNPLRVLDDKRPEVRELLADAPLMVDHLSVEAKEHYEQVKTHLSDLGVAFTENPRLVRGLDYYTKTTFEFVHDGLGAQSGIGGGGRYDGLMAELGGQELSGVGFGLGVDRTLLACQAEGLAVGDQARCDVYCVPLGEAAKRRLVTIAGGLRGAGVRADVAYGGKSLKGAMKGADRSGARFALVLGERDLEAGSAQLKDLASGEQRPVPLDDAVAAVREALQP</sequence>
<proteinExistence type="inferred from homology"/>
<name>SYH_SACEN</name>
<protein>
    <recommendedName>
        <fullName evidence="1">Histidine--tRNA ligase</fullName>
        <ecNumber evidence="1">6.1.1.21</ecNumber>
    </recommendedName>
    <alternativeName>
        <fullName evidence="1">Histidyl-tRNA synthetase</fullName>
        <shortName evidence="1">HisRS</shortName>
    </alternativeName>
</protein>
<feature type="chain" id="PRO_1000016441" description="Histidine--tRNA ligase">
    <location>
        <begin position="1"/>
        <end position="420"/>
    </location>
</feature>
<evidence type="ECO:0000255" key="1">
    <source>
        <dbReference type="HAMAP-Rule" id="MF_00127"/>
    </source>
</evidence>
<gene>
    <name evidence="1" type="primary">hisS</name>
    <name type="ordered locus">SACE_2032</name>
</gene>
<dbReference type="EC" id="6.1.1.21" evidence="1"/>
<dbReference type="EMBL" id="AM420293">
    <property type="protein sequence ID" value="CAM01342.1"/>
    <property type="molecule type" value="Genomic_DNA"/>
</dbReference>
<dbReference type="RefSeq" id="WP_009948960.1">
    <property type="nucleotide sequence ID" value="NC_009142.1"/>
</dbReference>
<dbReference type="SMR" id="A4FBB7"/>
<dbReference type="STRING" id="405948.SACE_2032"/>
<dbReference type="KEGG" id="sen:SACE_2032"/>
<dbReference type="eggNOG" id="COG0124">
    <property type="taxonomic scope" value="Bacteria"/>
</dbReference>
<dbReference type="HOGENOM" id="CLU_025113_1_1_11"/>
<dbReference type="OrthoDB" id="9800814at2"/>
<dbReference type="Proteomes" id="UP000006728">
    <property type="component" value="Chromosome"/>
</dbReference>
<dbReference type="GO" id="GO:0005737">
    <property type="term" value="C:cytoplasm"/>
    <property type="evidence" value="ECO:0007669"/>
    <property type="project" value="UniProtKB-SubCell"/>
</dbReference>
<dbReference type="GO" id="GO:0005524">
    <property type="term" value="F:ATP binding"/>
    <property type="evidence" value="ECO:0007669"/>
    <property type="project" value="UniProtKB-UniRule"/>
</dbReference>
<dbReference type="GO" id="GO:0004821">
    <property type="term" value="F:histidine-tRNA ligase activity"/>
    <property type="evidence" value="ECO:0007669"/>
    <property type="project" value="UniProtKB-UniRule"/>
</dbReference>
<dbReference type="GO" id="GO:0006427">
    <property type="term" value="P:histidyl-tRNA aminoacylation"/>
    <property type="evidence" value="ECO:0007669"/>
    <property type="project" value="UniProtKB-UniRule"/>
</dbReference>
<dbReference type="CDD" id="cd00773">
    <property type="entry name" value="HisRS-like_core"/>
    <property type="match status" value="1"/>
</dbReference>
<dbReference type="CDD" id="cd00859">
    <property type="entry name" value="HisRS_anticodon"/>
    <property type="match status" value="1"/>
</dbReference>
<dbReference type="Gene3D" id="3.40.50.800">
    <property type="entry name" value="Anticodon-binding domain"/>
    <property type="match status" value="1"/>
</dbReference>
<dbReference type="Gene3D" id="3.30.930.10">
    <property type="entry name" value="Bira Bifunctional Protein, Domain 2"/>
    <property type="match status" value="1"/>
</dbReference>
<dbReference type="HAMAP" id="MF_00127">
    <property type="entry name" value="His_tRNA_synth"/>
    <property type="match status" value="1"/>
</dbReference>
<dbReference type="InterPro" id="IPR006195">
    <property type="entry name" value="aa-tRNA-synth_II"/>
</dbReference>
<dbReference type="InterPro" id="IPR045864">
    <property type="entry name" value="aa-tRNA-synth_II/BPL/LPL"/>
</dbReference>
<dbReference type="InterPro" id="IPR004154">
    <property type="entry name" value="Anticodon-bd"/>
</dbReference>
<dbReference type="InterPro" id="IPR036621">
    <property type="entry name" value="Anticodon-bd_dom_sf"/>
</dbReference>
<dbReference type="InterPro" id="IPR015807">
    <property type="entry name" value="His-tRNA-ligase"/>
</dbReference>
<dbReference type="InterPro" id="IPR041715">
    <property type="entry name" value="HisRS-like_core"/>
</dbReference>
<dbReference type="InterPro" id="IPR004516">
    <property type="entry name" value="HisRS/HisZ"/>
</dbReference>
<dbReference type="InterPro" id="IPR033656">
    <property type="entry name" value="HisRS_anticodon"/>
</dbReference>
<dbReference type="NCBIfam" id="TIGR00442">
    <property type="entry name" value="hisS"/>
    <property type="match status" value="1"/>
</dbReference>
<dbReference type="PANTHER" id="PTHR43707:SF1">
    <property type="entry name" value="HISTIDINE--TRNA LIGASE, MITOCHONDRIAL-RELATED"/>
    <property type="match status" value="1"/>
</dbReference>
<dbReference type="PANTHER" id="PTHR43707">
    <property type="entry name" value="HISTIDYL-TRNA SYNTHETASE"/>
    <property type="match status" value="1"/>
</dbReference>
<dbReference type="Pfam" id="PF03129">
    <property type="entry name" value="HGTP_anticodon"/>
    <property type="match status" value="1"/>
</dbReference>
<dbReference type="Pfam" id="PF13393">
    <property type="entry name" value="tRNA-synt_His"/>
    <property type="match status" value="1"/>
</dbReference>
<dbReference type="PIRSF" id="PIRSF001549">
    <property type="entry name" value="His-tRNA_synth"/>
    <property type="match status" value="1"/>
</dbReference>
<dbReference type="SUPFAM" id="SSF52954">
    <property type="entry name" value="Class II aaRS ABD-related"/>
    <property type="match status" value="1"/>
</dbReference>
<dbReference type="SUPFAM" id="SSF55681">
    <property type="entry name" value="Class II aaRS and biotin synthetases"/>
    <property type="match status" value="1"/>
</dbReference>
<dbReference type="PROSITE" id="PS50862">
    <property type="entry name" value="AA_TRNA_LIGASE_II"/>
    <property type="match status" value="1"/>
</dbReference>